<sequence>MTRGAWMCRQYDDGLKIWLAAPRENEKPFIDSERAQKWRLSLASLLFFTVLLSDHLWFCAEAKLTRARDKEHQQQQRQQQQQQQQQRQRQQQQQQRRQQEPSWPALLASMGESSPAAQAHRLLSASSSPTLPPSPGDGGGGGGKGNRGKDDRGKALFLGNSAKPVWRLETCYPQGASSGQCFTVENADAVCARNWSRGAAGGDGQEVRSKHPTPLWNLSDFYLSFCNSYTLWELFSGLSSPNTLNCSLDVVLKEGGEMTTCRQCVEAYQDYDHHAQEKYEEFESVLHKYLQSEEYSVKSCPEDCKIVYKAWLCSQYFEVTQFNCRKTIPCKQYCLEVQTRCPFILPDNDEVIYGGLSSFICTGLYETFLTNDEPECCDVRREEKSNNPSKGTVEKSGSCHRTSLTVSSATRLCNSRLKLCVLVLILLHTVLTASAAQNTAGLSFGGINTLEENSTNEE</sequence>
<comment type="function">
    <text evidence="4">Auxillary component of the NALCN sodium channel complex, a channel that regulates the resting membrane potential and controls neuronal excitability.</text>
</comment>
<comment type="subunit">
    <text evidence="4 5 6">Component of the NALCN channel complex. NALCN complex consists of NALCN and auxiliary subunits, UNC79, UNC80 and NACL1. These auxiliary subunits are essential for the NALCN channel function.</text>
</comment>
<comment type="subcellular location">
    <subcellularLocation>
        <location evidence="4">Cell membrane</location>
        <topology evidence="2">Multi-pass membrane protein</topology>
    </subcellularLocation>
</comment>
<comment type="similarity">
    <text evidence="7">Belongs to the NALF family.</text>
</comment>
<gene>
    <name evidence="8" type="primary">NALF1</name>
    <name type="synonym">FAM155A</name>
    <name type="synonym">NLF-1</name>
</gene>
<reference key="1">
    <citation type="journal article" date="2004" name="Nat. Genet.">
        <title>Complete sequencing and characterization of 21,243 full-length human cDNAs.</title>
        <authorList>
            <person name="Ota T."/>
            <person name="Suzuki Y."/>
            <person name="Nishikawa T."/>
            <person name="Otsuki T."/>
            <person name="Sugiyama T."/>
            <person name="Irie R."/>
            <person name="Wakamatsu A."/>
            <person name="Hayashi K."/>
            <person name="Sato H."/>
            <person name="Nagai K."/>
            <person name="Kimura K."/>
            <person name="Makita H."/>
            <person name="Sekine M."/>
            <person name="Obayashi M."/>
            <person name="Nishi T."/>
            <person name="Shibahara T."/>
            <person name="Tanaka T."/>
            <person name="Ishii S."/>
            <person name="Yamamoto J."/>
            <person name="Saito K."/>
            <person name="Kawai Y."/>
            <person name="Isono Y."/>
            <person name="Nakamura Y."/>
            <person name="Nagahari K."/>
            <person name="Murakami K."/>
            <person name="Yasuda T."/>
            <person name="Iwayanagi T."/>
            <person name="Wagatsuma M."/>
            <person name="Shiratori A."/>
            <person name="Sudo H."/>
            <person name="Hosoiri T."/>
            <person name="Kaku Y."/>
            <person name="Kodaira H."/>
            <person name="Kondo H."/>
            <person name="Sugawara M."/>
            <person name="Takahashi M."/>
            <person name="Kanda K."/>
            <person name="Yokoi T."/>
            <person name="Furuya T."/>
            <person name="Kikkawa E."/>
            <person name="Omura Y."/>
            <person name="Abe K."/>
            <person name="Kamihara K."/>
            <person name="Katsuta N."/>
            <person name="Sato K."/>
            <person name="Tanikawa M."/>
            <person name="Yamazaki M."/>
            <person name="Ninomiya K."/>
            <person name="Ishibashi T."/>
            <person name="Yamashita H."/>
            <person name="Murakawa K."/>
            <person name="Fujimori K."/>
            <person name="Tanai H."/>
            <person name="Kimata M."/>
            <person name="Watanabe M."/>
            <person name="Hiraoka S."/>
            <person name="Chiba Y."/>
            <person name="Ishida S."/>
            <person name="Ono Y."/>
            <person name="Takiguchi S."/>
            <person name="Watanabe S."/>
            <person name="Yosida M."/>
            <person name="Hotuta T."/>
            <person name="Kusano J."/>
            <person name="Kanehori K."/>
            <person name="Takahashi-Fujii A."/>
            <person name="Hara H."/>
            <person name="Tanase T.-O."/>
            <person name="Nomura Y."/>
            <person name="Togiya S."/>
            <person name="Komai F."/>
            <person name="Hara R."/>
            <person name="Takeuchi K."/>
            <person name="Arita M."/>
            <person name="Imose N."/>
            <person name="Musashino K."/>
            <person name="Yuuki H."/>
            <person name="Oshima A."/>
            <person name="Sasaki N."/>
            <person name="Aotsuka S."/>
            <person name="Yoshikawa Y."/>
            <person name="Matsunawa H."/>
            <person name="Ichihara T."/>
            <person name="Shiohata N."/>
            <person name="Sano S."/>
            <person name="Moriya S."/>
            <person name="Momiyama H."/>
            <person name="Satoh N."/>
            <person name="Takami S."/>
            <person name="Terashima Y."/>
            <person name="Suzuki O."/>
            <person name="Nakagawa S."/>
            <person name="Senoh A."/>
            <person name="Mizoguchi H."/>
            <person name="Goto Y."/>
            <person name="Shimizu F."/>
            <person name="Wakebe H."/>
            <person name="Hishigaki H."/>
            <person name="Watanabe T."/>
            <person name="Sugiyama A."/>
            <person name="Takemoto M."/>
            <person name="Kawakami B."/>
            <person name="Yamazaki M."/>
            <person name="Watanabe K."/>
            <person name="Kumagai A."/>
            <person name="Itakura S."/>
            <person name="Fukuzumi Y."/>
            <person name="Fujimori Y."/>
            <person name="Komiyama M."/>
            <person name="Tashiro H."/>
            <person name="Tanigami A."/>
            <person name="Fujiwara T."/>
            <person name="Ono T."/>
            <person name="Yamada K."/>
            <person name="Fujii Y."/>
            <person name="Ozaki K."/>
            <person name="Hirao M."/>
            <person name="Ohmori Y."/>
            <person name="Kawabata A."/>
            <person name="Hikiji T."/>
            <person name="Kobatake N."/>
            <person name="Inagaki H."/>
            <person name="Ikema Y."/>
            <person name="Okamoto S."/>
            <person name="Okitani R."/>
            <person name="Kawakami T."/>
            <person name="Noguchi S."/>
            <person name="Itoh T."/>
            <person name="Shigeta K."/>
            <person name="Senba T."/>
            <person name="Matsumura K."/>
            <person name="Nakajima Y."/>
            <person name="Mizuno T."/>
            <person name="Morinaga M."/>
            <person name="Sasaki M."/>
            <person name="Togashi T."/>
            <person name="Oyama M."/>
            <person name="Hata H."/>
            <person name="Watanabe M."/>
            <person name="Komatsu T."/>
            <person name="Mizushima-Sugano J."/>
            <person name="Satoh T."/>
            <person name="Shirai Y."/>
            <person name="Takahashi Y."/>
            <person name="Nakagawa K."/>
            <person name="Okumura K."/>
            <person name="Nagase T."/>
            <person name="Nomura N."/>
            <person name="Kikuchi H."/>
            <person name="Masuho Y."/>
            <person name="Yamashita R."/>
            <person name="Nakai K."/>
            <person name="Yada T."/>
            <person name="Nakamura Y."/>
            <person name="Ohara O."/>
            <person name="Isogai T."/>
            <person name="Sugano S."/>
        </authorList>
    </citation>
    <scope>NUCLEOTIDE SEQUENCE [LARGE SCALE MRNA]</scope>
    <source>
        <tissue>Corpus callosum</tissue>
    </source>
</reference>
<reference key="2">
    <citation type="journal article" date="2004" name="Nature">
        <title>The DNA sequence and analysis of human chromosome 13.</title>
        <authorList>
            <person name="Dunham A."/>
            <person name="Matthews L.H."/>
            <person name="Burton J."/>
            <person name="Ashurst J.L."/>
            <person name="Howe K.L."/>
            <person name="Ashcroft K.J."/>
            <person name="Beare D.M."/>
            <person name="Burford D.C."/>
            <person name="Hunt S.E."/>
            <person name="Griffiths-Jones S."/>
            <person name="Jones M.C."/>
            <person name="Keenan S.J."/>
            <person name="Oliver K."/>
            <person name="Scott C.E."/>
            <person name="Ainscough R."/>
            <person name="Almeida J.P."/>
            <person name="Ambrose K.D."/>
            <person name="Andrews D.T."/>
            <person name="Ashwell R.I.S."/>
            <person name="Babbage A.K."/>
            <person name="Bagguley C.L."/>
            <person name="Bailey J."/>
            <person name="Bannerjee R."/>
            <person name="Barlow K.F."/>
            <person name="Bates K."/>
            <person name="Beasley H."/>
            <person name="Bird C.P."/>
            <person name="Bray-Allen S."/>
            <person name="Brown A.J."/>
            <person name="Brown J.Y."/>
            <person name="Burrill W."/>
            <person name="Carder C."/>
            <person name="Carter N.P."/>
            <person name="Chapman J.C."/>
            <person name="Clamp M.E."/>
            <person name="Clark S.Y."/>
            <person name="Clarke G."/>
            <person name="Clee C.M."/>
            <person name="Clegg S.C."/>
            <person name="Cobley V."/>
            <person name="Collins J.E."/>
            <person name="Corby N."/>
            <person name="Coville G.J."/>
            <person name="Deloukas P."/>
            <person name="Dhami P."/>
            <person name="Dunham I."/>
            <person name="Dunn M."/>
            <person name="Earthrowl M.E."/>
            <person name="Ellington A.G."/>
            <person name="Faulkner L."/>
            <person name="Frankish A.G."/>
            <person name="Frankland J."/>
            <person name="French L."/>
            <person name="Garner P."/>
            <person name="Garnett J."/>
            <person name="Gilbert J.G.R."/>
            <person name="Gilson C.J."/>
            <person name="Ghori J."/>
            <person name="Grafham D.V."/>
            <person name="Gribble S.M."/>
            <person name="Griffiths C."/>
            <person name="Hall R.E."/>
            <person name="Hammond S."/>
            <person name="Harley J.L."/>
            <person name="Hart E.A."/>
            <person name="Heath P.D."/>
            <person name="Howden P.J."/>
            <person name="Huckle E.J."/>
            <person name="Hunt P.J."/>
            <person name="Hunt A.R."/>
            <person name="Johnson C."/>
            <person name="Johnson D."/>
            <person name="Kay M."/>
            <person name="Kimberley A.M."/>
            <person name="King A."/>
            <person name="Laird G.K."/>
            <person name="Langford C.J."/>
            <person name="Lawlor S."/>
            <person name="Leongamornlert D.A."/>
            <person name="Lloyd D.M."/>
            <person name="Lloyd C."/>
            <person name="Loveland J.E."/>
            <person name="Lovell J."/>
            <person name="Martin S."/>
            <person name="Mashreghi-Mohammadi M."/>
            <person name="McLaren S.J."/>
            <person name="McMurray A."/>
            <person name="Milne S."/>
            <person name="Moore M.J.F."/>
            <person name="Nickerson T."/>
            <person name="Palmer S.A."/>
            <person name="Pearce A.V."/>
            <person name="Peck A.I."/>
            <person name="Pelan S."/>
            <person name="Phillimore B."/>
            <person name="Porter K.M."/>
            <person name="Rice C.M."/>
            <person name="Searle S."/>
            <person name="Sehra H.K."/>
            <person name="Shownkeen R."/>
            <person name="Skuce C.D."/>
            <person name="Smith M."/>
            <person name="Steward C.A."/>
            <person name="Sycamore N."/>
            <person name="Tester J."/>
            <person name="Thomas D.W."/>
            <person name="Tracey A."/>
            <person name="Tromans A."/>
            <person name="Tubby B."/>
            <person name="Wall M."/>
            <person name="Wallis J.M."/>
            <person name="West A.P."/>
            <person name="Whitehead S.L."/>
            <person name="Willey D.L."/>
            <person name="Wilming L."/>
            <person name="Wray P.W."/>
            <person name="Wright M.W."/>
            <person name="Young L."/>
            <person name="Coulson A."/>
            <person name="Durbin R.M."/>
            <person name="Hubbard T."/>
            <person name="Sulston J.E."/>
            <person name="Beck S."/>
            <person name="Bentley D.R."/>
            <person name="Rogers J."/>
            <person name="Ross M.T."/>
        </authorList>
    </citation>
    <scope>NUCLEOTIDE SEQUENCE [LARGE SCALE GENOMIC DNA]</scope>
</reference>
<reference key="3">
    <citation type="journal article" date="2004" name="Genome Res.">
        <title>The status, quality, and expansion of the NIH full-length cDNA project: the Mammalian Gene Collection (MGC).</title>
        <authorList>
            <consortium name="The MGC Project Team"/>
        </authorList>
    </citation>
    <scope>NUCLEOTIDE SEQUENCE [LARGE SCALE MRNA]</scope>
</reference>
<reference key="4">
    <citation type="journal article" date="2020" name="Sci. Adv.">
        <title>The NALCN channel complex is voltage sensitive and directly modulated by extracellular calcium.</title>
        <authorList>
            <person name="Chua H.C."/>
            <person name="Wulf M."/>
            <person name="Weidling C."/>
            <person name="Rasmussen L.P."/>
            <person name="Pless S.A."/>
        </authorList>
    </citation>
    <scope>FUNCTION</scope>
    <scope>SUBUNIT</scope>
    <scope>SUBCELLULAR LOCATION</scope>
</reference>
<reference evidence="9" key="5">
    <citation type="journal article" date="2020" name="Nature">
        <title>Structure of the human sodium leak channel NALCN.</title>
        <authorList>
            <person name="Kschonsak M."/>
            <person name="Chua H.C."/>
            <person name="Noland C.L."/>
            <person name="Weidling C."/>
            <person name="Clairfeuille T."/>
            <person name="Bahlke O.O."/>
            <person name="Ameen A.O."/>
            <person name="Li Z.R."/>
            <person name="Arthur C.P."/>
            <person name="Ciferri C."/>
            <person name="Pless S.A."/>
            <person name="Payandeh J."/>
        </authorList>
    </citation>
    <scope>STRUCTURE BY ELECTRON MICROSCOPY (2.80 ANGSTROMS) IN COMPLEX WITH NALCN</scope>
    <scope>DISULFIDE BONDS</scope>
    <scope>SUBUNIT</scope>
</reference>
<reference evidence="10" key="6">
    <citation type="journal article" date="2020" name="Nat. Commun.">
        <title>Structure of the human sodium leak channel NALCN in complex with FAM155A.</title>
        <authorList>
            <person name="Xie J."/>
            <person name="Ke M."/>
            <person name="Xu L."/>
            <person name="Lin S."/>
            <person name="Huang J."/>
            <person name="Zhang J."/>
            <person name="Yang F."/>
            <person name="Wu J."/>
            <person name="Yan Z."/>
        </authorList>
    </citation>
    <scope>STRUCTURE BY ELECTRON MICROSCOPY (3.10 ANGSTROMS) IN COMPLEX WITH NALCN</scope>
    <scope>DISULFIDE BONDS</scope>
    <scope>GLYCOSYLATION AT ASN-217</scope>
</reference>
<proteinExistence type="evidence at protein level"/>
<evidence type="ECO:0000250" key="1">
    <source>
        <dbReference type="UniProtKB" id="Q8CCS2"/>
    </source>
</evidence>
<evidence type="ECO:0000255" key="2"/>
<evidence type="ECO:0000256" key="3">
    <source>
        <dbReference type="SAM" id="MobiDB-lite"/>
    </source>
</evidence>
<evidence type="ECO:0000269" key="4">
    <source>
    </source>
</evidence>
<evidence type="ECO:0000269" key="5">
    <source>
    </source>
</evidence>
<evidence type="ECO:0000269" key="6">
    <source>
    </source>
</evidence>
<evidence type="ECO:0000305" key="7"/>
<evidence type="ECO:0000312" key="8">
    <source>
        <dbReference type="HGNC" id="HGNC:33877"/>
    </source>
</evidence>
<evidence type="ECO:0007744" key="9">
    <source>
        <dbReference type="PDB" id="6XIW"/>
    </source>
</evidence>
<evidence type="ECO:0007744" key="10">
    <source>
        <dbReference type="PDB" id="7CM3"/>
    </source>
</evidence>
<evidence type="ECO:0007829" key="11">
    <source>
        <dbReference type="PDB" id="6XIW"/>
    </source>
</evidence>
<evidence type="ECO:0007829" key="12">
    <source>
        <dbReference type="PDB" id="7CM3"/>
    </source>
</evidence>
<evidence type="ECO:0007829" key="13">
    <source>
        <dbReference type="PDB" id="7SX3"/>
    </source>
</evidence>
<organism>
    <name type="scientific">Homo sapiens</name>
    <name type="common">Human</name>
    <dbReference type="NCBI Taxonomy" id="9606"/>
    <lineage>
        <taxon>Eukaryota</taxon>
        <taxon>Metazoa</taxon>
        <taxon>Chordata</taxon>
        <taxon>Craniata</taxon>
        <taxon>Vertebrata</taxon>
        <taxon>Euteleostomi</taxon>
        <taxon>Mammalia</taxon>
        <taxon>Eutheria</taxon>
        <taxon>Euarchontoglires</taxon>
        <taxon>Primates</taxon>
        <taxon>Haplorrhini</taxon>
        <taxon>Catarrhini</taxon>
        <taxon>Hominidae</taxon>
        <taxon>Homo</taxon>
    </lineage>
</organism>
<keyword id="KW-0002">3D-structure</keyword>
<keyword id="KW-1003">Cell membrane</keyword>
<keyword id="KW-1015">Disulfide bond</keyword>
<keyword id="KW-0325">Glycoprotein</keyword>
<keyword id="KW-0472">Membrane</keyword>
<keyword id="KW-1267">Proteomics identification</keyword>
<keyword id="KW-1185">Reference proteome</keyword>
<keyword id="KW-0812">Transmembrane</keyword>
<keyword id="KW-1133">Transmembrane helix</keyword>
<accession>B1AL88</accession>
<accession>B2RUV1</accession>
<accession>B7Z334</accession>
<name>NALF1_HUMAN</name>
<feature type="chain" id="PRO_0000339373" description="NALCN channel auxiliary factor 1">
    <location>
        <begin position="1"/>
        <end position="458"/>
    </location>
</feature>
<feature type="transmembrane region" description="Helical" evidence="2">
    <location>
        <begin position="40"/>
        <end position="60"/>
    </location>
</feature>
<feature type="transmembrane region" description="Helical" evidence="2">
    <location>
        <begin position="417"/>
        <end position="437"/>
    </location>
</feature>
<feature type="region of interest" description="Disordered" evidence="3">
    <location>
        <begin position="70"/>
        <end position="155"/>
    </location>
</feature>
<feature type="compositionally biased region" description="Low complexity" evidence="3">
    <location>
        <begin position="75"/>
        <end position="96"/>
    </location>
</feature>
<feature type="compositionally biased region" description="Gly residues" evidence="3">
    <location>
        <begin position="136"/>
        <end position="145"/>
    </location>
</feature>
<feature type="glycosylation site" description="N-linked (GlcNAc...) asparagine" evidence="6 10">
    <location>
        <position position="217"/>
    </location>
</feature>
<feature type="disulfide bond" evidence="1">
    <location>
        <begin position="191"/>
        <end position="261"/>
    </location>
</feature>
<feature type="disulfide bond" evidence="5 6 9 10">
    <location>
        <begin position="226"/>
        <end position="313"/>
    </location>
</feature>
<feature type="disulfide bond" evidence="6 10">
    <location>
        <begin position="246"/>
        <end position="261"/>
    </location>
</feature>
<feature type="disulfide bond" evidence="5 6 9 10">
    <location>
        <begin position="304"/>
        <end position="341"/>
    </location>
</feature>
<feature type="disulfide bond" evidence="5 6 9 10">
    <location>
        <begin position="324"/>
        <end position="377"/>
    </location>
</feature>
<feature type="disulfide bond" evidence="5 6 9 10">
    <location>
        <begin position="330"/>
        <end position="376"/>
    </location>
</feature>
<feature type="disulfide bond" evidence="5 6 9 10">
    <location>
        <begin position="334"/>
        <end position="361"/>
    </location>
</feature>
<feature type="helix" evidence="13">
    <location>
        <begin position="187"/>
        <end position="190"/>
    </location>
</feature>
<feature type="turn" evidence="12">
    <location>
        <begin position="201"/>
        <end position="203"/>
    </location>
</feature>
<feature type="helix" evidence="11">
    <location>
        <begin position="218"/>
        <end position="220"/>
    </location>
</feature>
<feature type="strand" evidence="12">
    <location>
        <begin position="224"/>
        <end position="226"/>
    </location>
</feature>
<feature type="helix" evidence="11">
    <location>
        <begin position="231"/>
        <end position="236"/>
    </location>
</feature>
<feature type="turn" evidence="12">
    <location>
        <begin position="246"/>
        <end position="248"/>
    </location>
</feature>
<feature type="helix" evidence="11">
    <location>
        <begin position="262"/>
        <end position="287"/>
    </location>
</feature>
<feature type="turn" evidence="11">
    <location>
        <begin position="290"/>
        <end position="294"/>
    </location>
</feature>
<feature type="helix" evidence="11">
    <location>
        <begin position="301"/>
        <end position="316"/>
    </location>
</feature>
<feature type="strand" evidence="11">
    <location>
        <begin position="325"/>
        <end position="329"/>
    </location>
</feature>
<feature type="helix" evidence="11">
    <location>
        <begin position="330"/>
        <end position="340"/>
    </location>
</feature>
<feature type="strand" evidence="12">
    <location>
        <begin position="349"/>
        <end position="351"/>
    </location>
</feature>
<feature type="strand" evidence="11">
    <location>
        <begin position="375"/>
        <end position="377"/>
    </location>
</feature>
<protein>
    <recommendedName>
        <fullName>NALCN channel auxiliary factor 1</fullName>
    </recommendedName>
    <alternativeName>
        <fullName>Transmembrane protein FAM155A</fullName>
    </alternativeName>
</protein>
<dbReference type="EMBL" id="AK295445">
    <property type="protein sequence ID" value="BAH12070.1"/>
    <property type="molecule type" value="mRNA"/>
</dbReference>
<dbReference type="EMBL" id="AL138914">
    <property type="status" value="NOT_ANNOTATED_CDS"/>
    <property type="molecule type" value="Genomic_DNA"/>
</dbReference>
<dbReference type="EMBL" id="AL445204">
    <property type="status" value="NOT_ANNOTATED_CDS"/>
    <property type="molecule type" value="Genomic_DNA"/>
</dbReference>
<dbReference type="EMBL" id="AL136964">
    <property type="status" value="NOT_ANNOTATED_CDS"/>
    <property type="molecule type" value="Genomic_DNA"/>
</dbReference>
<dbReference type="EMBL" id="BC146878">
    <property type="protein sequence ID" value="AAI46879.1"/>
    <property type="molecule type" value="mRNA"/>
</dbReference>
<dbReference type="EMBL" id="BC157830">
    <property type="protein sequence ID" value="AAI57831.1"/>
    <property type="molecule type" value="mRNA"/>
</dbReference>
<dbReference type="EMBL" id="BC157855">
    <property type="protein sequence ID" value="AAI57856.1"/>
    <property type="molecule type" value="mRNA"/>
</dbReference>
<dbReference type="EMBL" id="BC157862">
    <property type="protein sequence ID" value="AAI57863.1"/>
    <property type="molecule type" value="mRNA"/>
</dbReference>
<dbReference type="CCDS" id="CCDS32006.1"/>
<dbReference type="RefSeq" id="NP_001073865.1">
    <property type="nucleotide sequence ID" value="NM_001080396.3"/>
</dbReference>
<dbReference type="PDB" id="6XIW">
    <property type="method" value="EM"/>
    <property type="resolution" value="2.80 A"/>
    <property type="chains" value="B=1-458"/>
</dbReference>
<dbReference type="PDB" id="7CM3">
    <property type="method" value="EM"/>
    <property type="resolution" value="3.10 A"/>
    <property type="chains" value="B=1-458"/>
</dbReference>
<dbReference type="PDB" id="7SX3">
    <property type="method" value="EM"/>
    <property type="resolution" value="3.10 A"/>
    <property type="chains" value="B=1-458"/>
</dbReference>
<dbReference type="PDB" id="7SX4">
    <property type="method" value="EM"/>
    <property type="resolution" value="3.50 A"/>
    <property type="chains" value="B=1-458"/>
</dbReference>
<dbReference type="PDB" id="7WJI">
    <property type="method" value="EM"/>
    <property type="resolution" value="4.50 A"/>
    <property type="chains" value="D=1-458"/>
</dbReference>
<dbReference type="PDBsum" id="6XIW"/>
<dbReference type="PDBsum" id="7CM3"/>
<dbReference type="PDBsum" id="7SX3"/>
<dbReference type="PDBsum" id="7SX4"/>
<dbReference type="PDBsum" id="7WJI"/>
<dbReference type="EMDB" id="EMD-22203"/>
<dbReference type="EMDB" id="EMD-25492"/>
<dbReference type="EMDB" id="EMD-25493"/>
<dbReference type="EMDB" id="EMD-30400"/>
<dbReference type="EMDB" id="EMD-32544"/>
<dbReference type="SMR" id="B1AL88"/>
<dbReference type="BioGRID" id="608648">
    <property type="interactions" value="1"/>
</dbReference>
<dbReference type="ComplexPortal" id="CPX-2341">
    <property type="entry name" value="NALCN channelosome complex"/>
</dbReference>
<dbReference type="FunCoup" id="B1AL88">
    <property type="interactions" value="558"/>
</dbReference>
<dbReference type="IntAct" id="B1AL88">
    <property type="interactions" value="1"/>
</dbReference>
<dbReference type="STRING" id="9606.ENSP00000365080"/>
<dbReference type="GlyCosmos" id="B1AL88">
    <property type="glycosylation" value="1 site, No reported glycans"/>
</dbReference>
<dbReference type="GlyGen" id="B1AL88">
    <property type="glycosylation" value="1 site"/>
</dbReference>
<dbReference type="iPTMnet" id="B1AL88"/>
<dbReference type="PhosphoSitePlus" id="B1AL88"/>
<dbReference type="BioMuta" id="FAM155A"/>
<dbReference type="jPOST" id="B1AL88"/>
<dbReference type="MassIVE" id="B1AL88"/>
<dbReference type="PaxDb" id="9606-ENSP00000365080"/>
<dbReference type="PeptideAtlas" id="B1AL88"/>
<dbReference type="ProteomicsDB" id="3138"/>
<dbReference type="Antibodypedia" id="48568">
    <property type="antibodies" value="98 antibodies from 14 providers"/>
</dbReference>
<dbReference type="DNASU" id="728215"/>
<dbReference type="Ensembl" id="ENST00000375915.4">
    <property type="protein sequence ID" value="ENSP00000365080.1"/>
    <property type="gene ID" value="ENSG00000204442.4"/>
</dbReference>
<dbReference type="GeneID" id="728215"/>
<dbReference type="KEGG" id="hsa:728215"/>
<dbReference type="MANE-Select" id="ENST00000375915.4">
    <property type="protein sequence ID" value="ENSP00000365080.1"/>
    <property type="RefSeq nucleotide sequence ID" value="NM_001080396.3"/>
    <property type="RefSeq protein sequence ID" value="NP_001073865.1"/>
</dbReference>
<dbReference type="UCSC" id="uc001vql.4">
    <property type="organism name" value="human"/>
</dbReference>
<dbReference type="AGR" id="HGNC:33877"/>
<dbReference type="CTD" id="728215"/>
<dbReference type="DisGeNET" id="728215"/>
<dbReference type="GeneCards" id="NALF1"/>
<dbReference type="HGNC" id="HGNC:33877">
    <property type="gene designation" value="NALF1"/>
</dbReference>
<dbReference type="HPA" id="ENSG00000204442">
    <property type="expression patterns" value="Tissue enhanced (brain, pituitary gland)"/>
</dbReference>
<dbReference type="MIM" id="619899">
    <property type="type" value="gene"/>
</dbReference>
<dbReference type="neXtProt" id="NX_B1AL88"/>
<dbReference type="OpenTargets" id="ENSG00000204442"/>
<dbReference type="VEuPathDB" id="HostDB:ENSG00000204442"/>
<dbReference type="eggNOG" id="ENOG502QQKW">
    <property type="taxonomic scope" value="Eukaryota"/>
</dbReference>
<dbReference type="GeneTree" id="ENSGT00940000155696"/>
<dbReference type="HOGENOM" id="CLU_058453_0_0_1"/>
<dbReference type="InParanoid" id="B1AL88"/>
<dbReference type="OMA" id="CMDECKM"/>
<dbReference type="OrthoDB" id="10047996at2759"/>
<dbReference type="PAN-GO" id="B1AL88">
    <property type="GO annotations" value="3 GO annotations based on evolutionary models"/>
</dbReference>
<dbReference type="PhylomeDB" id="B1AL88"/>
<dbReference type="TreeFam" id="TF331752"/>
<dbReference type="PathwayCommons" id="B1AL88"/>
<dbReference type="BioGRID-ORCS" id="728215">
    <property type="hits" value="11 hits in 1152 CRISPR screens"/>
</dbReference>
<dbReference type="ChiTaRS" id="FAM155A">
    <property type="organism name" value="human"/>
</dbReference>
<dbReference type="GenomeRNAi" id="728215"/>
<dbReference type="Pharos" id="B1AL88">
    <property type="development level" value="Tdark"/>
</dbReference>
<dbReference type="PRO" id="PR:B1AL88"/>
<dbReference type="Proteomes" id="UP000005640">
    <property type="component" value="Chromosome 13"/>
</dbReference>
<dbReference type="RNAct" id="B1AL88">
    <property type="molecule type" value="protein"/>
</dbReference>
<dbReference type="Bgee" id="ENSG00000204442">
    <property type="expression patterns" value="Expressed in endothelial cell and 139 other cell types or tissues"/>
</dbReference>
<dbReference type="GO" id="GO:0005886">
    <property type="term" value="C:plasma membrane"/>
    <property type="evidence" value="ECO:0000314"/>
    <property type="project" value="UniProtKB"/>
</dbReference>
<dbReference type="GO" id="GO:0098703">
    <property type="term" value="P:calcium ion import across plasma membrane"/>
    <property type="evidence" value="ECO:0000318"/>
    <property type="project" value="GO_Central"/>
</dbReference>
<dbReference type="InterPro" id="IPR055288">
    <property type="entry name" value="NALCN_aux_factor_1/2"/>
</dbReference>
<dbReference type="PANTHER" id="PTHR15819:SF9">
    <property type="entry name" value="NALCN CHANNEL AUXILIARY FACTOR 1"/>
    <property type="match status" value="1"/>
</dbReference>
<dbReference type="PANTHER" id="PTHR15819">
    <property type="entry name" value="TRANSMEMBRANE PROTEIN FAM155"/>
    <property type="match status" value="1"/>
</dbReference>
<dbReference type="SUPFAM" id="SSF81995">
    <property type="entry name" value="beta-sandwich domain of Sec23/24"/>
    <property type="match status" value="1"/>
</dbReference>